<organism>
    <name type="scientific">Brucella ovis (strain ATCC 25840 / 63/290 / NCTC 10512)</name>
    <dbReference type="NCBI Taxonomy" id="444178"/>
    <lineage>
        <taxon>Bacteria</taxon>
        <taxon>Pseudomonadati</taxon>
        <taxon>Pseudomonadota</taxon>
        <taxon>Alphaproteobacteria</taxon>
        <taxon>Hyphomicrobiales</taxon>
        <taxon>Brucellaceae</taxon>
        <taxon>Brucella/Ochrobactrum group</taxon>
        <taxon>Brucella</taxon>
    </lineage>
</organism>
<accession>A5VTB6</accession>
<proteinExistence type="inferred from homology"/>
<sequence>MFNTHKVEIEWGGRPLTIETGKIARQADGAVLATYGETAVLATVVSAKEPKPGQDFFPLTVNYQEKTYAAGKIPGGYFKREGRPSENETLVSRLIDRPIRPLFVDGYKNDTQVVITVLQHDLENNPDILSMVAASAALTISGVPFMGPISGARVGYIDGEYVLNPNIDEMPESKLDLVVAGTSEAVLMVESEAQELPEDVMLGAVMFGHKSFQPVIDAIIKLAEVAAKEPRDFQPEDLSELEAKVLAVVENDLREAYKITEKQARYAAVDAAKAKAKEHFFPEGVEETEMLAEQFATIFTHLQAKIVRWNILDTGNRIDGRDLSTVRPIVSEVGILPRTHGSALFTRGETQAIVVATLGTGEDEQMIDALTGTYKESFMLHYNFPPYSVGETGRMGSPGRREIGHGKLAWRAIHPMLPAAEQFPYTIRAVSEITESNGSSSMATVCGTSLALMDAGVPIVRPVAGIAMGLIKEGERFAVLSDILGDEDHLGDMDFKVAGTEFGITSLQMDIKIDGITEEIMKVALEQAKGGRVHILGEMAKAISSSRAELGEFAPRIEVMNIPTDKIRDVIGSGGKVIREIVEKTGAKINIEDDGTVKIASSNGKEIEAAKKWIHSIVAEPEVGEIYEGTVVKTADFGAFVNFFGPRDGLVHISQLAADRVAKTTDVVKEGQKVWVKLMGFDERGKVRLSMKVVDQETGKEIVAEKKKEEVDAE</sequence>
<comment type="function">
    <text evidence="1">Involved in mRNA degradation. Catalyzes the phosphorolysis of single-stranded polyribonucleotides processively in the 3'- to 5'-direction.</text>
</comment>
<comment type="catalytic activity">
    <reaction evidence="1">
        <text>RNA(n+1) + phosphate = RNA(n) + a ribonucleoside 5'-diphosphate</text>
        <dbReference type="Rhea" id="RHEA:22096"/>
        <dbReference type="Rhea" id="RHEA-COMP:14527"/>
        <dbReference type="Rhea" id="RHEA-COMP:17342"/>
        <dbReference type="ChEBI" id="CHEBI:43474"/>
        <dbReference type="ChEBI" id="CHEBI:57930"/>
        <dbReference type="ChEBI" id="CHEBI:140395"/>
        <dbReference type="EC" id="2.7.7.8"/>
    </reaction>
</comment>
<comment type="cofactor">
    <cofactor evidence="1">
        <name>Mg(2+)</name>
        <dbReference type="ChEBI" id="CHEBI:18420"/>
    </cofactor>
</comment>
<comment type="subcellular location">
    <subcellularLocation>
        <location evidence="1">Cytoplasm</location>
    </subcellularLocation>
</comment>
<comment type="similarity">
    <text evidence="1">Belongs to the polyribonucleotide nucleotidyltransferase family.</text>
</comment>
<name>PNP_BRUO2</name>
<gene>
    <name evidence="1" type="primary">pnp</name>
    <name type="ordered locus">BOV_2081</name>
</gene>
<dbReference type="EC" id="2.7.7.8" evidence="1"/>
<dbReference type="EMBL" id="CP000708">
    <property type="protein sequence ID" value="ABQ60716.1"/>
    <property type="molecule type" value="Genomic_DNA"/>
</dbReference>
<dbReference type="RefSeq" id="WP_006014606.1">
    <property type="nucleotide sequence ID" value="NC_009505.1"/>
</dbReference>
<dbReference type="SMR" id="A5VTB6"/>
<dbReference type="GeneID" id="45125412"/>
<dbReference type="KEGG" id="bov:BOV_2081"/>
<dbReference type="HOGENOM" id="CLU_004217_2_2_5"/>
<dbReference type="PhylomeDB" id="A5VTB6"/>
<dbReference type="Proteomes" id="UP000006383">
    <property type="component" value="Chromosome I"/>
</dbReference>
<dbReference type="GO" id="GO:0005829">
    <property type="term" value="C:cytosol"/>
    <property type="evidence" value="ECO:0007669"/>
    <property type="project" value="TreeGrafter"/>
</dbReference>
<dbReference type="GO" id="GO:0000175">
    <property type="term" value="F:3'-5'-RNA exonuclease activity"/>
    <property type="evidence" value="ECO:0007669"/>
    <property type="project" value="TreeGrafter"/>
</dbReference>
<dbReference type="GO" id="GO:0000287">
    <property type="term" value="F:magnesium ion binding"/>
    <property type="evidence" value="ECO:0007669"/>
    <property type="project" value="UniProtKB-UniRule"/>
</dbReference>
<dbReference type="GO" id="GO:0004654">
    <property type="term" value="F:polyribonucleotide nucleotidyltransferase activity"/>
    <property type="evidence" value="ECO:0007669"/>
    <property type="project" value="UniProtKB-UniRule"/>
</dbReference>
<dbReference type="GO" id="GO:0003723">
    <property type="term" value="F:RNA binding"/>
    <property type="evidence" value="ECO:0007669"/>
    <property type="project" value="UniProtKB-UniRule"/>
</dbReference>
<dbReference type="GO" id="GO:0006402">
    <property type="term" value="P:mRNA catabolic process"/>
    <property type="evidence" value="ECO:0007669"/>
    <property type="project" value="UniProtKB-UniRule"/>
</dbReference>
<dbReference type="GO" id="GO:0006396">
    <property type="term" value="P:RNA processing"/>
    <property type="evidence" value="ECO:0007669"/>
    <property type="project" value="InterPro"/>
</dbReference>
<dbReference type="CDD" id="cd02393">
    <property type="entry name" value="KH-I_PNPase"/>
    <property type="match status" value="1"/>
</dbReference>
<dbReference type="CDD" id="cd11363">
    <property type="entry name" value="RNase_PH_PNPase_1"/>
    <property type="match status" value="1"/>
</dbReference>
<dbReference type="CDD" id="cd11364">
    <property type="entry name" value="RNase_PH_PNPase_2"/>
    <property type="match status" value="1"/>
</dbReference>
<dbReference type="CDD" id="cd04472">
    <property type="entry name" value="S1_PNPase"/>
    <property type="match status" value="1"/>
</dbReference>
<dbReference type="FunFam" id="2.40.50.140:FF:000107">
    <property type="entry name" value="Polyribonucleotide nucleotidyltransferase"/>
    <property type="match status" value="1"/>
</dbReference>
<dbReference type="FunFam" id="3.30.1370.10:FF:000001">
    <property type="entry name" value="Polyribonucleotide nucleotidyltransferase"/>
    <property type="match status" value="1"/>
</dbReference>
<dbReference type="FunFam" id="3.30.230.70:FF:000001">
    <property type="entry name" value="Polyribonucleotide nucleotidyltransferase"/>
    <property type="match status" value="1"/>
</dbReference>
<dbReference type="FunFam" id="3.30.230.70:FF:000002">
    <property type="entry name" value="Polyribonucleotide nucleotidyltransferase"/>
    <property type="match status" value="1"/>
</dbReference>
<dbReference type="Gene3D" id="3.30.230.70">
    <property type="entry name" value="GHMP Kinase, N-terminal domain"/>
    <property type="match status" value="2"/>
</dbReference>
<dbReference type="Gene3D" id="3.30.1370.10">
    <property type="entry name" value="K Homology domain, type 1"/>
    <property type="match status" value="1"/>
</dbReference>
<dbReference type="Gene3D" id="2.40.50.140">
    <property type="entry name" value="Nucleic acid-binding proteins"/>
    <property type="match status" value="1"/>
</dbReference>
<dbReference type="HAMAP" id="MF_01595">
    <property type="entry name" value="PNPase"/>
    <property type="match status" value="1"/>
</dbReference>
<dbReference type="InterPro" id="IPR001247">
    <property type="entry name" value="ExoRNase_PH_dom1"/>
</dbReference>
<dbReference type="InterPro" id="IPR015847">
    <property type="entry name" value="ExoRNase_PH_dom2"/>
</dbReference>
<dbReference type="InterPro" id="IPR036345">
    <property type="entry name" value="ExoRNase_PH_dom2_sf"/>
</dbReference>
<dbReference type="InterPro" id="IPR004087">
    <property type="entry name" value="KH_dom"/>
</dbReference>
<dbReference type="InterPro" id="IPR004088">
    <property type="entry name" value="KH_dom_type_1"/>
</dbReference>
<dbReference type="InterPro" id="IPR036612">
    <property type="entry name" value="KH_dom_type_1_sf"/>
</dbReference>
<dbReference type="InterPro" id="IPR012340">
    <property type="entry name" value="NA-bd_OB-fold"/>
</dbReference>
<dbReference type="InterPro" id="IPR012162">
    <property type="entry name" value="PNPase"/>
</dbReference>
<dbReference type="InterPro" id="IPR027408">
    <property type="entry name" value="PNPase/RNase_PH_dom_sf"/>
</dbReference>
<dbReference type="InterPro" id="IPR015848">
    <property type="entry name" value="PNPase_PH_RNA-bd_bac/org-type"/>
</dbReference>
<dbReference type="InterPro" id="IPR020568">
    <property type="entry name" value="Ribosomal_Su5_D2-typ_SF"/>
</dbReference>
<dbReference type="InterPro" id="IPR003029">
    <property type="entry name" value="S1_domain"/>
</dbReference>
<dbReference type="NCBIfam" id="TIGR03591">
    <property type="entry name" value="polynuc_phos"/>
    <property type="match status" value="1"/>
</dbReference>
<dbReference type="NCBIfam" id="NF008805">
    <property type="entry name" value="PRK11824.1"/>
    <property type="match status" value="1"/>
</dbReference>
<dbReference type="PANTHER" id="PTHR11252">
    <property type="entry name" value="POLYRIBONUCLEOTIDE NUCLEOTIDYLTRANSFERASE"/>
    <property type="match status" value="1"/>
</dbReference>
<dbReference type="PANTHER" id="PTHR11252:SF0">
    <property type="entry name" value="POLYRIBONUCLEOTIDE NUCLEOTIDYLTRANSFERASE 1, MITOCHONDRIAL"/>
    <property type="match status" value="1"/>
</dbReference>
<dbReference type="Pfam" id="PF00013">
    <property type="entry name" value="KH_1"/>
    <property type="match status" value="1"/>
</dbReference>
<dbReference type="Pfam" id="PF03726">
    <property type="entry name" value="PNPase"/>
    <property type="match status" value="1"/>
</dbReference>
<dbReference type="Pfam" id="PF01138">
    <property type="entry name" value="RNase_PH"/>
    <property type="match status" value="2"/>
</dbReference>
<dbReference type="Pfam" id="PF03725">
    <property type="entry name" value="RNase_PH_C"/>
    <property type="match status" value="2"/>
</dbReference>
<dbReference type="Pfam" id="PF00575">
    <property type="entry name" value="S1"/>
    <property type="match status" value="1"/>
</dbReference>
<dbReference type="PIRSF" id="PIRSF005499">
    <property type="entry name" value="PNPase"/>
    <property type="match status" value="1"/>
</dbReference>
<dbReference type="SMART" id="SM00322">
    <property type="entry name" value="KH"/>
    <property type="match status" value="1"/>
</dbReference>
<dbReference type="SMART" id="SM00316">
    <property type="entry name" value="S1"/>
    <property type="match status" value="1"/>
</dbReference>
<dbReference type="SUPFAM" id="SSF54791">
    <property type="entry name" value="Eukaryotic type KH-domain (KH-domain type I)"/>
    <property type="match status" value="1"/>
</dbReference>
<dbReference type="SUPFAM" id="SSF50249">
    <property type="entry name" value="Nucleic acid-binding proteins"/>
    <property type="match status" value="1"/>
</dbReference>
<dbReference type="SUPFAM" id="SSF55666">
    <property type="entry name" value="Ribonuclease PH domain 2-like"/>
    <property type="match status" value="2"/>
</dbReference>
<dbReference type="SUPFAM" id="SSF54211">
    <property type="entry name" value="Ribosomal protein S5 domain 2-like"/>
    <property type="match status" value="2"/>
</dbReference>
<dbReference type="PROSITE" id="PS50084">
    <property type="entry name" value="KH_TYPE_1"/>
    <property type="match status" value="1"/>
</dbReference>
<dbReference type="PROSITE" id="PS50126">
    <property type="entry name" value="S1"/>
    <property type="match status" value="1"/>
</dbReference>
<evidence type="ECO:0000255" key="1">
    <source>
        <dbReference type="HAMAP-Rule" id="MF_01595"/>
    </source>
</evidence>
<keyword id="KW-0963">Cytoplasm</keyword>
<keyword id="KW-0460">Magnesium</keyword>
<keyword id="KW-0479">Metal-binding</keyword>
<keyword id="KW-0548">Nucleotidyltransferase</keyword>
<keyword id="KW-0694">RNA-binding</keyword>
<keyword id="KW-0808">Transferase</keyword>
<protein>
    <recommendedName>
        <fullName evidence="1">Polyribonucleotide nucleotidyltransferase</fullName>
        <ecNumber evidence="1">2.7.7.8</ecNumber>
    </recommendedName>
    <alternativeName>
        <fullName evidence="1">Polynucleotide phosphorylase</fullName>
        <shortName evidence="1">PNPase</shortName>
    </alternativeName>
</protein>
<reference key="1">
    <citation type="journal article" date="2009" name="PLoS ONE">
        <title>Genome degradation in Brucella ovis corresponds with narrowing of its host range and tissue tropism.</title>
        <authorList>
            <person name="Tsolis R.M."/>
            <person name="Seshadri R."/>
            <person name="Santos R.L."/>
            <person name="Sangari F.J."/>
            <person name="Lobo J.M."/>
            <person name="de Jong M.F."/>
            <person name="Ren Q."/>
            <person name="Myers G."/>
            <person name="Brinkac L.M."/>
            <person name="Nelson W.C."/>
            <person name="Deboy R.T."/>
            <person name="Angiuoli S."/>
            <person name="Khouri H."/>
            <person name="Dimitrov G."/>
            <person name="Robinson J.R."/>
            <person name="Mulligan S."/>
            <person name="Walker R.L."/>
            <person name="Elzer P.E."/>
            <person name="Hassan K.A."/>
            <person name="Paulsen I.T."/>
        </authorList>
    </citation>
    <scope>NUCLEOTIDE SEQUENCE [LARGE SCALE GENOMIC DNA]</scope>
    <source>
        <strain>ATCC 25840 / 63/290 / NCTC 10512</strain>
    </source>
</reference>
<feature type="chain" id="PRO_0000329548" description="Polyribonucleotide nucleotidyltransferase">
    <location>
        <begin position="1"/>
        <end position="714"/>
    </location>
</feature>
<feature type="domain" description="KH" evidence="1">
    <location>
        <begin position="555"/>
        <end position="614"/>
    </location>
</feature>
<feature type="domain" description="S1 motif" evidence="1">
    <location>
        <begin position="624"/>
        <end position="692"/>
    </location>
</feature>
<feature type="binding site" evidence="1">
    <location>
        <position position="488"/>
    </location>
    <ligand>
        <name>Mg(2+)</name>
        <dbReference type="ChEBI" id="CHEBI:18420"/>
    </ligand>
</feature>
<feature type="binding site" evidence="1">
    <location>
        <position position="494"/>
    </location>
    <ligand>
        <name>Mg(2+)</name>
        <dbReference type="ChEBI" id="CHEBI:18420"/>
    </ligand>
</feature>